<comment type="function">
    <text evidence="4">Involved in the biosynthesis of the labdane-type bicyclic diterpene labda-8(17),12(E),14-triene. Catalyzes the conversion of (+)-copalyl diphosphate to yield labda-8(17),12(E),14-triene.</text>
</comment>
<comment type="catalytic activity">
    <reaction evidence="1">
        <text>(+)-copalyl diphosphate = (12E)-labda-8(17),12,14-triene + diphosphate</text>
        <dbReference type="Rhea" id="RHEA:54640"/>
        <dbReference type="ChEBI" id="CHEBI:33019"/>
        <dbReference type="ChEBI" id="CHEBI:58635"/>
        <dbReference type="ChEBI" id="CHEBI:138302"/>
        <dbReference type="EC" id="4.2.3.193"/>
    </reaction>
</comment>
<comment type="cofactor">
    <cofactor evidence="1">
        <name>Mg(2+)</name>
        <dbReference type="ChEBI" id="CHEBI:18420"/>
    </cofactor>
    <text evidence="2">Binds 3 Mg(2+) ions per subunit.</text>
</comment>
<comment type="domain">
    <text evidence="7">The Asp-Asp-Xaa-Xaa-Xaa-Glu (DDXXXE) and Asn-Xaa-Xaa-Xaa-Ser-Xaa-Xaa-Xaa-Glu (NSE) motifs are important for the catalytic activity, presumably through binding to Mg(2+).</text>
</comment>
<comment type="similarity">
    <text evidence="6">Belongs to the terpene synthase family.</text>
</comment>
<comment type="caution">
    <text evidence="4">Not expressed under laboratory conditions.</text>
</comment>
<name>RMND_STRAQ</name>
<gene>
    <name evidence="5" type="primary">rmnD</name>
</gene>
<protein>
    <recommendedName>
        <fullName evidence="5">(12E)-labda-8(17),12,14-triene synthase</fullName>
        <ecNumber evidence="4">4.2.3.193</ecNumber>
    </recommendedName>
    <alternativeName>
        <fullName evidence="5">Type-A diterpene synthase</fullName>
    </alternativeName>
</protein>
<sequence length="322" mass="35384">MNDATRTSTTPPALPMPDLRDSFPGPFPASAHADDIERHATQWLRTFPLIRSERALSALTHITGQGVARTFPTAGRDELFLCADLFLWLTAFDDAHGEATGAADPARLLRTTSEYVHLLAGHHEPPGGPSVFGAALRDLLDRYGERATPAQYARLTAHLRDNLFGILWEAHHLHRPDRVTLPDYLAMRPHTVFVRTVVATAEVMLGYELTEPDRSSEPVRELETAVADLAGWINDLASYAKETARDGSATLGLPALLMRQHECDLEEAFRRASLMCEQQAAVAAARIAELTAGGGPLADHAHALRSVASSYVWHIDDSRYRT</sequence>
<evidence type="ECO:0000250" key="1">
    <source>
        <dbReference type="UniProtKB" id="A0A0H5BN57"/>
    </source>
</evidence>
<evidence type="ECO:0000250" key="2">
    <source>
        <dbReference type="UniProtKB" id="B5HDJ6"/>
    </source>
</evidence>
<evidence type="ECO:0000256" key="3">
    <source>
        <dbReference type="SAM" id="MobiDB-lite"/>
    </source>
</evidence>
<evidence type="ECO:0000269" key="4">
    <source>
    </source>
</evidence>
<evidence type="ECO:0000303" key="5">
    <source>
    </source>
</evidence>
<evidence type="ECO:0000305" key="6"/>
<evidence type="ECO:0000305" key="7">
    <source>
    </source>
</evidence>
<evidence type="ECO:0000312" key="8">
    <source>
        <dbReference type="EMBL" id="BAR97463.1"/>
    </source>
</evidence>
<accession>A0A0H5BN61</accession>
<keyword id="KW-0456">Lyase</keyword>
<keyword id="KW-0460">Magnesium</keyword>
<keyword id="KW-0479">Metal-binding</keyword>
<dbReference type="EC" id="4.2.3.193" evidence="4"/>
<dbReference type="EMBL" id="LC064029">
    <property type="protein sequence ID" value="BAR97463.1"/>
    <property type="molecule type" value="Genomic_DNA"/>
</dbReference>
<dbReference type="SMR" id="A0A0H5BN61"/>
<dbReference type="GO" id="GO:0046872">
    <property type="term" value="F:metal ion binding"/>
    <property type="evidence" value="ECO:0007669"/>
    <property type="project" value="UniProtKB-KW"/>
</dbReference>
<dbReference type="GO" id="GO:0010333">
    <property type="term" value="F:terpene synthase activity"/>
    <property type="evidence" value="ECO:0007669"/>
    <property type="project" value="InterPro"/>
</dbReference>
<dbReference type="Gene3D" id="1.10.600.10">
    <property type="entry name" value="Farnesyl Diphosphate Synthase"/>
    <property type="match status" value="1"/>
</dbReference>
<dbReference type="InterPro" id="IPR008949">
    <property type="entry name" value="Isoprenoid_synthase_dom_sf"/>
</dbReference>
<dbReference type="InterPro" id="IPR034686">
    <property type="entry name" value="Terpene_cyclase-like_2"/>
</dbReference>
<dbReference type="Pfam" id="PF19086">
    <property type="entry name" value="Terpene_syn_C_2"/>
    <property type="match status" value="1"/>
</dbReference>
<dbReference type="SFLD" id="SFLDS00005">
    <property type="entry name" value="Isoprenoid_Synthase_Type_I"/>
    <property type="match status" value="1"/>
</dbReference>
<dbReference type="SFLD" id="SFLDG01020">
    <property type="entry name" value="Terpene_Cyclase_Like_2"/>
    <property type="match status" value="1"/>
</dbReference>
<dbReference type="SUPFAM" id="SSF48576">
    <property type="entry name" value="Terpenoid synthases"/>
    <property type="match status" value="1"/>
</dbReference>
<organism>
    <name type="scientific">Streptomyces anulatus</name>
    <name type="common">Streptomyces chrysomallus</name>
    <dbReference type="NCBI Taxonomy" id="1892"/>
    <lineage>
        <taxon>Bacteria</taxon>
        <taxon>Bacillati</taxon>
        <taxon>Actinomycetota</taxon>
        <taxon>Actinomycetes</taxon>
        <taxon>Kitasatosporales</taxon>
        <taxon>Streptomycetaceae</taxon>
        <taxon>Streptomyces</taxon>
    </lineage>
</organism>
<feature type="chain" id="PRO_0000444808" description="(12E)-labda-8(17),12,14-triene synthase">
    <location>
        <begin position="1"/>
        <end position="322"/>
    </location>
</feature>
<feature type="region of interest" description="Disordered" evidence="3">
    <location>
        <begin position="1"/>
        <end position="26"/>
    </location>
</feature>
<feature type="short sequence motif" description="DDXXXE motif" evidence="7">
    <location>
        <begin position="93"/>
        <end position="98"/>
    </location>
</feature>
<feature type="short sequence motif" description="NXXXSXXXE motif" evidence="7">
    <location>
        <begin position="234"/>
        <end position="242"/>
    </location>
</feature>
<feature type="compositionally biased region" description="Polar residues" evidence="3">
    <location>
        <begin position="1"/>
        <end position="11"/>
    </location>
</feature>
<feature type="binding site" evidence="2">
    <location>
        <position position="93"/>
    </location>
    <ligand>
        <name>Mg(2+)</name>
        <dbReference type="ChEBI" id="CHEBI:18420"/>
        <label>1</label>
    </ligand>
</feature>
<feature type="binding site" evidence="2">
    <location>
        <position position="98"/>
    </location>
    <ligand>
        <name>Mg(2+)</name>
        <dbReference type="ChEBI" id="CHEBI:18420"/>
        <label>1</label>
    </ligand>
</feature>
<feature type="binding site" evidence="2">
    <location>
        <position position="98"/>
    </location>
    <ligand>
        <name>Mg(2+)</name>
        <dbReference type="ChEBI" id="CHEBI:18420"/>
        <label>2</label>
    </ligand>
</feature>
<feature type="binding site" evidence="2">
    <location>
        <position position="188"/>
    </location>
    <ligand>
        <name>substrate</name>
    </ligand>
</feature>
<feature type="binding site" evidence="2">
    <location>
        <position position="234"/>
    </location>
    <ligand>
        <name>Mg(2+)</name>
        <dbReference type="ChEBI" id="CHEBI:18420"/>
        <label>3</label>
    </ligand>
</feature>
<feature type="binding site" evidence="2">
    <location>
        <position position="238"/>
    </location>
    <ligand>
        <name>Mg(2+)</name>
        <dbReference type="ChEBI" id="CHEBI:18420"/>
        <label>3</label>
    </ligand>
</feature>
<feature type="binding site" evidence="2">
    <location>
        <position position="241"/>
    </location>
    <ligand>
        <name>substrate</name>
    </ligand>
</feature>
<feature type="binding site" evidence="2">
    <location>
        <position position="242"/>
    </location>
    <ligand>
        <name>Mg(2+)</name>
        <dbReference type="ChEBI" id="CHEBI:18420"/>
        <label>3</label>
    </ligand>
</feature>
<feature type="binding site" evidence="2">
    <location>
        <begin position="319"/>
        <end position="320"/>
    </location>
    <ligand>
        <name>substrate</name>
    </ligand>
</feature>
<proteinExistence type="inferred from homology"/>
<reference key="1">
    <citation type="journal article" date="2016" name="J. Ind. Microbiol. Biotechnol.">
        <title>Biosynthesis of mercapturic acid derivative of the labdane-type diterpene, cyslabdan that potentiates imipenem activity against methicillin-resistant Staphylococcus aureus: cyslabdan is generated by mycothiol-mediated xenobiotic detoxification.</title>
        <authorList>
            <person name="Ikeda H."/>
            <person name="Shin-ya K."/>
            <person name="Nagamitsu T."/>
            <person name="Tomoda H."/>
        </authorList>
    </citation>
    <scope>NUCLEOTIDE SEQUENCE [GENOMIC DNA]</scope>
    <scope>FUNCTION</scope>
    <scope>DOMAIN</scope>
    <source>
        <strain evidence="8">GM95</strain>
    </source>
</reference>